<accession>A9M2Y6</accession>
<dbReference type="EC" id="2.3.1.117" evidence="1"/>
<dbReference type="EMBL" id="CP000381">
    <property type="protein sequence ID" value="ABX73948.1"/>
    <property type="molecule type" value="Genomic_DNA"/>
</dbReference>
<dbReference type="RefSeq" id="WP_002220281.1">
    <property type="nucleotide sequence ID" value="NC_010120.1"/>
</dbReference>
<dbReference type="SMR" id="A9M2Y6"/>
<dbReference type="KEGG" id="nmn:NMCC_1808"/>
<dbReference type="HOGENOM" id="CLU_050859_0_1_4"/>
<dbReference type="UniPathway" id="UPA00034">
    <property type="reaction ID" value="UER00019"/>
</dbReference>
<dbReference type="Proteomes" id="UP000001177">
    <property type="component" value="Chromosome"/>
</dbReference>
<dbReference type="GO" id="GO:0005737">
    <property type="term" value="C:cytoplasm"/>
    <property type="evidence" value="ECO:0007669"/>
    <property type="project" value="UniProtKB-SubCell"/>
</dbReference>
<dbReference type="GO" id="GO:0008666">
    <property type="term" value="F:2,3,4,5-tetrahydropyridine-2,6-dicarboxylate N-succinyltransferase activity"/>
    <property type="evidence" value="ECO:0007669"/>
    <property type="project" value="UniProtKB-UniRule"/>
</dbReference>
<dbReference type="GO" id="GO:0016779">
    <property type="term" value="F:nucleotidyltransferase activity"/>
    <property type="evidence" value="ECO:0007669"/>
    <property type="project" value="TreeGrafter"/>
</dbReference>
<dbReference type="GO" id="GO:0019877">
    <property type="term" value="P:diaminopimelate biosynthetic process"/>
    <property type="evidence" value="ECO:0007669"/>
    <property type="project" value="UniProtKB-UniRule"/>
</dbReference>
<dbReference type="GO" id="GO:0009089">
    <property type="term" value="P:lysine biosynthetic process via diaminopimelate"/>
    <property type="evidence" value="ECO:0007669"/>
    <property type="project" value="UniProtKB-UniRule"/>
</dbReference>
<dbReference type="CDD" id="cd03350">
    <property type="entry name" value="LbH_THP_succinylT"/>
    <property type="match status" value="1"/>
</dbReference>
<dbReference type="Gene3D" id="2.160.10.10">
    <property type="entry name" value="Hexapeptide repeat proteins"/>
    <property type="match status" value="1"/>
</dbReference>
<dbReference type="Gene3D" id="1.10.166.10">
    <property type="entry name" value="Tetrahydrodipicolinate-N-succinyltransferase, N-terminal domain"/>
    <property type="match status" value="1"/>
</dbReference>
<dbReference type="HAMAP" id="MF_00811">
    <property type="entry name" value="DapD"/>
    <property type="match status" value="1"/>
</dbReference>
<dbReference type="InterPro" id="IPR005664">
    <property type="entry name" value="DapD_Trfase_Hexpep_rpt_fam"/>
</dbReference>
<dbReference type="InterPro" id="IPR001451">
    <property type="entry name" value="Hexapep"/>
</dbReference>
<dbReference type="InterPro" id="IPR018357">
    <property type="entry name" value="Hexapep_transf_CS"/>
</dbReference>
<dbReference type="InterPro" id="IPR023180">
    <property type="entry name" value="THP_succinylTrfase_dom1"/>
</dbReference>
<dbReference type="InterPro" id="IPR037133">
    <property type="entry name" value="THP_succinylTrfase_N_sf"/>
</dbReference>
<dbReference type="InterPro" id="IPR011004">
    <property type="entry name" value="Trimer_LpxA-like_sf"/>
</dbReference>
<dbReference type="NCBIfam" id="TIGR00965">
    <property type="entry name" value="dapD"/>
    <property type="match status" value="1"/>
</dbReference>
<dbReference type="NCBIfam" id="NF008808">
    <property type="entry name" value="PRK11830.1"/>
    <property type="match status" value="1"/>
</dbReference>
<dbReference type="PANTHER" id="PTHR19136:SF52">
    <property type="entry name" value="2,3,4,5-TETRAHYDROPYRIDINE-2,6-DICARBOXYLATE N-SUCCINYLTRANSFERASE"/>
    <property type="match status" value="1"/>
</dbReference>
<dbReference type="PANTHER" id="PTHR19136">
    <property type="entry name" value="MOLYBDENUM COFACTOR GUANYLYLTRANSFERASE"/>
    <property type="match status" value="1"/>
</dbReference>
<dbReference type="Pfam" id="PF14602">
    <property type="entry name" value="Hexapep_2"/>
    <property type="match status" value="1"/>
</dbReference>
<dbReference type="Pfam" id="PF14805">
    <property type="entry name" value="THDPS_N_2"/>
    <property type="match status" value="1"/>
</dbReference>
<dbReference type="SUPFAM" id="SSF51161">
    <property type="entry name" value="Trimeric LpxA-like enzymes"/>
    <property type="match status" value="1"/>
</dbReference>
<dbReference type="PROSITE" id="PS00101">
    <property type="entry name" value="HEXAPEP_TRANSFERASES"/>
    <property type="match status" value="1"/>
</dbReference>
<reference key="1">
    <citation type="journal article" date="2008" name="Genomics">
        <title>Characterization of ST-4821 complex, a unique Neisseria meningitidis clone.</title>
        <authorList>
            <person name="Peng J."/>
            <person name="Yang L."/>
            <person name="Yang F."/>
            <person name="Yang J."/>
            <person name="Yan Y."/>
            <person name="Nie H."/>
            <person name="Zhang X."/>
            <person name="Xiong Z."/>
            <person name="Jiang Y."/>
            <person name="Cheng F."/>
            <person name="Xu X."/>
            <person name="Chen S."/>
            <person name="Sun L."/>
            <person name="Li W."/>
            <person name="Shen Y."/>
            <person name="Shao Z."/>
            <person name="Liang X."/>
            <person name="Xu J."/>
            <person name="Jin Q."/>
        </authorList>
    </citation>
    <scope>NUCLEOTIDE SEQUENCE [LARGE SCALE GENOMIC DNA]</scope>
    <source>
        <strain>053442</strain>
    </source>
</reference>
<proteinExistence type="inferred from homology"/>
<sequence length="273" mass="29440">MSLQNIIETAFENRADITPTTVTPEVKEAVLETIRQLDSGKLRVAERLGVGEWKVNEWAKKAVLLSFRIQDNEVLNDGVNKYFDKVPTKFADWSEDEFKNAGFRAVPGAVARRGSFVAKNVVLMPSYVNIGAYVDEGAMVDTWATVGSCAQIGKNVHLSGGVGIGGVLEPLQAAPTIIEDNCFIGARSEIVEGVIVEEGSVISMGVFIGQSTKIFDRTTGEIYQGRVPTGSVVVSGSMPSKDGSHSLYCAVIVKRVDAQTRAKTSVNELLRGI</sequence>
<keyword id="KW-0012">Acyltransferase</keyword>
<keyword id="KW-0028">Amino-acid biosynthesis</keyword>
<keyword id="KW-0963">Cytoplasm</keyword>
<keyword id="KW-0220">Diaminopimelate biosynthesis</keyword>
<keyword id="KW-0457">Lysine biosynthesis</keyword>
<keyword id="KW-0677">Repeat</keyword>
<keyword id="KW-0808">Transferase</keyword>
<protein>
    <recommendedName>
        <fullName evidence="1">2,3,4,5-tetrahydropyridine-2,6-dicarboxylate N-succinyltransferase</fullName>
        <ecNumber evidence="1">2.3.1.117</ecNumber>
    </recommendedName>
    <alternativeName>
        <fullName evidence="1">Tetrahydrodipicolinate N-succinyltransferase</fullName>
        <shortName evidence="1">THDP succinyltransferase</shortName>
        <shortName evidence="1">THP succinyltransferase</shortName>
        <shortName evidence="1">Tetrahydropicolinate succinylase</shortName>
    </alternativeName>
</protein>
<feature type="chain" id="PRO_1000083753" description="2,3,4,5-tetrahydropyridine-2,6-dicarboxylate N-succinyltransferase">
    <location>
        <begin position="1"/>
        <end position="273"/>
    </location>
</feature>
<feature type="binding site" evidence="1">
    <location>
        <position position="104"/>
    </location>
    <ligand>
        <name>substrate</name>
    </ligand>
</feature>
<feature type="binding site" evidence="1">
    <location>
        <position position="141"/>
    </location>
    <ligand>
        <name>substrate</name>
    </ligand>
</feature>
<gene>
    <name evidence="1" type="primary">dapD</name>
    <name type="ordered locus">NMCC_1808</name>
</gene>
<comment type="catalytic activity">
    <reaction evidence="1">
        <text>(S)-2,3,4,5-tetrahydrodipicolinate + succinyl-CoA + H2O = (S)-2-succinylamino-6-oxoheptanedioate + CoA</text>
        <dbReference type="Rhea" id="RHEA:17325"/>
        <dbReference type="ChEBI" id="CHEBI:15377"/>
        <dbReference type="ChEBI" id="CHEBI:15685"/>
        <dbReference type="ChEBI" id="CHEBI:16845"/>
        <dbReference type="ChEBI" id="CHEBI:57287"/>
        <dbReference type="ChEBI" id="CHEBI:57292"/>
        <dbReference type="EC" id="2.3.1.117"/>
    </reaction>
</comment>
<comment type="pathway">
    <text evidence="1">Amino-acid biosynthesis; L-lysine biosynthesis via DAP pathway; LL-2,6-diaminopimelate from (S)-tetrahydrodipicolinate (succinylase route): step 1/3.</text>
</comment>
<comment type="subunit">
    <text evidence="1">Homotrimer.</text>
</comment>
<comment type="subcellular location">
    <subcellularLocation>
        <location evidence="1">Cytoplasm</location>
    </subcellularLocation>
</comment>
<comment type="similarity">
    <text evidence="1">Belongs to the transferase hexapeptide repeat family.</text>
</comment>
<name>DAPD_NEIM0</name>
<organism>
    <name type="scientific">Neisseria meningitidis serogroup C (strain 053442)</name>
    <dbReference type="NCBI Taxonomy" id="374833"/>
    <lineage>
        <taxon>Bacteria</taxon>
        <taxon>Pseudomonadati</taxon>
        <taxon>Pseudomonadota</taxon>
        <taxon>Betaproteobacteria</taxon>
        <taxon>Neisseriales</taxon>
        <taxon>Neisseriaceae</taxon>
        <taxon>Neisseria</taxon>
    </lineage>
</organism>
<evidence type="ECO:0000255" key="1">
    <source>
        <dbReference type="HAMAP-Rule" id="MF_00811"/>
    </source>
</evidence>